<sequence>MNKTKSEHIKQQALDLFTRLQFLLQKHDTIEPYQYVLDILETGISKTKHNQQTPERQARVVYNKIASQALVDKLHFTAEENKVLAAINELAHSQKGWGEFNMLDTTNTWPSQ</sequence>
<dbReference type="EMBL" id="M83924">
    <property type="protein sequence ID" value="AAA25560.1"/>
    <property type="molecule type" value="Genomic_DNA"/>
</dbReference>
<dbReference type="EMBL" id="U02482">
    <property type="protein sequence ID" value="AAC43294.1"/>
    <property type="molecule type" value="Genomic_DNA"/>
</dbReference>
<dbReference type="PIR" id="B48941">
    <property type="entry name" value="B48941"/>
</dbReference>
<dbReference type="RefSeq" id="NP_857603.1">
    <property type="nucleotide sequence ID" value="NC_004832.1"/>
</dbReference>
<dbReference type="RefSeq" id="WP_002834573.1">
    <property type="nucleotide sequence ID" value="NZ_VCYC01000012.1"/>
</dbReference>
<dbReference type="SMR" id="P36496"/>
<dbReference type="GO" id="GO:0030153">
    <property type="term" value="P:bacteriocin immunity"/>
    <property type="evidence" value="ECO:0007669"/>
    <property type="project" value="UniProtKB-KW"/>
</dbReference>
<dbReference type="Gene3D" id="1.20.1440.140">
    <property type="match status" value="1"/>
</dbReference>
<dbReference type="InterPro" id="IPR053739">
    <property type="entry name" value="Bact_Immunity_Domain_sf"/>
</dbReference>
<proteinExistence type="predicted"/>
<keyword id="KW-0079">Bacteriocin immunity</keyword>
<keyword id="KW-0614">Plasmid</keyword>
<accession>P36496</accession>
<gene>
    <name type="primary">pedB</name>
    <name type="synonym">papB</name>
</gene>
<name>PEDB_PEDAC</name>
<reference key="1">
    <citation type="journal article" date="1992" name="Appl. Environ. Microbiol.">
        <title>Cloning, expression, and nucleotide sequence of genes involved in production of pediocin PA-1, and bacteriocin from Pediococcus acidilactici PAC1.0.</title>
        <authorList>
            <person name="Marugg J.D."/>
            <person name="Gonzalez C.F."/>
            <person name="Kunka B.S."/>
            <person name="Ledeboer A.M."/>
            <person name="Pucci M.J."/>
            <person name="Toonen M.Y."/>
            <person name="Walker S.A."/>
            <person name="Zoetmulder L.C.M."/>
            <person name="Vandenbergh P.A."/>
        </authorList>
    </citation>
    <scope>NUCLEOTIDE SEQUENCE [GENOMIC DNA]</scope>
    <source>
        <strain>PAC-1.0</strain>
        <plasmid>pSRQ11</plasmid>
    </source>
</reference>
<reference key="2">
    <citation type="journal article" date="1994" name="Lett. Appl. Microbiol.">
        <title>Complete nucleotide sequence of pSMB 74, a plasmid encoding the production of pediocin AcH in Pediococcus acidilactici.</title>
        <authorList>
            <person name="Motlagh A.M."/>
            <person name="Bukhtiyarova M.B."/>
            <person name="Ray B.R."/>
        </authorList>
    </citation>
    <scope>NUCLEOTIDE SEQUENCE [GENOMIC DNA]</scope>
    <source>
        <strain>H</strain>
        <plasmid>pSMB74</plasmid>
    </source>
</reference>
<feature type="chain" id="PRO_0000206201" description="Pediocin PA-1 immunity protein">
    <location>
        <begin position="1"/>
        <end position="112"/>
    </location>
</feature>
<comment type="function">
    <text>Imparts immunity to pediocin PA-1/ACH to naturally sensitive host strains.</text>
</comment>
<organism>
    <name type="scientific">Pediococcus acidilactici</name>
    <dbReference type="NCBI Taxonomy" id="1254"/>
    <lineage>
        <taxon>Bacteria</taxon>
        <taxon>Bacillati</taxon>
        <taxon>Bacillota</taxon>
        <taxon>Bacilli</taxon>
        <taxon>Lactobacillales</taxon>
        <taxon>Lactobacillaceae</taxon>
        <taxon>Pediococcus</taxon>
        <taxon>Pediococcus acidilactici group</taxon>
    </lineage>
</organism>
<geneLocation type="plasmid">
    <name>pSRQ11</name>
</geneLocation>
<geneLocation type="plasmid">
    <name>pSMB74</name>
</geneLocation>
<protein>
    <recommendedName>
        <fullName>Pediocin PA-1 immunity protein</fullName>
    </recommendedName>
    <alternativeName>
        <fullName>Pediocin ACH immunity protein</fullName>
    </alternativeName>
</protein>